<name>GSA_PSEPW</name>
<evidence type="ECO:0000255" key="1">
    <source>
        <dbReference type="HAMAP-Rule" id="MF_00375"/>
    </source>
</evidence>
<accession>B1J1Y6</accession>
<protein>
    <recommendedName>
        <fullName evidence="1">Glutamate-1-semialdehyde 2,1-aminomutase</fullName>
        <shortName evidence="1">GSA</shortName>
        <ecNumber evidence="1">5.4.3.8</ecNumber>
    </recommendedName>
    <alternativeName>
        <fullName evidence="1">Glutamate-1-semialdehyde aminotransferase</fullName>
        <shortName evidence="1">GSA-AT</shortName>
    </alternativeName>
</protein>
<reference key="1">
    <citation type="submission" date="2008-02" db="EMBL/GenBank/DDBJ databases">
        <title>Complete sequence of Pseudomonas putida W619.</title>
        <authorList>
            <person name="Copeland A."/>
            <person name="Lucas S."/>
            <person name="Lapidus A."/>
            <person name="Barry K."/>
            <person name="Detter J.C."/>
            <person name="Glavina del Rio T."/>
            <person name="Dalin E."/>
            <person name="Tice H."/>
            <person name="Pitluck S."/>
            <person name="Chain P."/>
            <person name="Malfatti S."/>
            <person name="Shin M."/>
            <person name="Vergez L."/>
            <person name="Schmutz J."/>
            <person name="Larimer F."/>
            <person name="Land M."/>
            <person name="Hauser L."/>
            <person name="Kyrpides N."/>
            <person name="Kim E."/>
            <person name="Taghavi S."/>
            <person name="Vangronsveld D."/>
            <person name="van der Lelie D."/>
            <person name="Richardson P."/>
        </authorList>
    </citation>
    <scope>NUCLEOTIDE SEQUENCE [LARGE SCALE GENOMIC DNA]</scope>
    <source>
        <strain>W619</strain>
    </source>
</reference>
<proteinExistence type="inferred from homology"/>
<comment type="catalytic activity">
    <reaction evidence="1">
        <text>(S)-4-amino-5-oxopentanoate = 5-aminolevulinate</text>
        <dbReference type="Rhea" id="RHEA:14265"/>
        <dbReference type="ChEBI" id="CHEBI:57501"/>
        <dbReference type="ChEBI" id="CHEBI:356416"/>
        <dbReference type="EC" id="5.4.3.8"/>
    </reaction>
</comment>
<comment type="cofactor">
    <cofactor evidence="1">
        <name>pyridoxal 5'-phosphate</name>
        <dbReference type="ChEBI" id="CHEBI:597326"/>
    </cofactor>
</comment>
<comment type="pathway">
    <text evidence="1">Porphyrin-containing compound metabolism; protoporphyrin-IX biosynthesis; 5-aminolevulinate from L-glutamyl-tRNA(Glu): step 2/2.</text>
</comment>
<comment type="subunit">
    <text evidence="1">Homodimer.</text>
</comment>
<comment type="subcellular location">
    <subcellularLocation>
        <location evidence="1">Cytoplasm</location>
    </subcellularLocation>
</comment>
<comment type="similarity">
    <text evidence="1">Belongs to the class-III pyridoxal-phosphate-dependent aminotransferase family. HemL subfamily.</text>
</comment>
<feature type="chain" id="PRO_1000121911" description="Glutamate-1-semialdehyde 2,1-aminomutase">
    <location>
        <begin position="1"/>
        <end position="427"/>
    </location>
</feature>
<feature type="modified residue" description="N6-(pyridoxal phosphate)lysine" evidence="1">
    <location>
        <position position="265"/>
    </location>
</feature>
<dbReference type="EC" id="5.4.3.8" evidence="1"/>
<dbReference type="EMBL" id="CP000949">
    <property type="protein sequence ID" value="ACA71141.1"/>
    <property type="molecule type" value="Genomic_DNA"/>
</dbReference>
<dbReference type="SMR" id="B1J1Y6"/>
<dbReference type="STRING" id="390235.PputW619_0636"/>
<dbReference type="KEGG" id="ppw:PputW619_0636"/>
<dbReference type="eggNOG" id="COG0001">
    <property type="taxonomic scope" value="Bacteria"/>
</dbReference>
<dbReference type="HOGENOM" id="CLU_016922_1_5_6"/>
<dbReference type="OrthoDB" id="9801052at2"/>
<dbReference type="UniPathway" id="UPA00251">
    <property type="reaction ID" value="UER00317"/>
</dbReference>
<dbReference type="GO" id="GO:0005737">
    <property type="term" value="C:cytoplasm"/>
    <property type="evidence" value="ECO:0007669"/>
    <property type="project" value="UniProtKB-SubCell"/>
</dbReference>
<dbReference type="GO" id="GO:0042286">
    <property type="term" value="F:glutamate-1-semialdehyde 2,1-aminomutase activity"/>
    <property type="evidence" value="ECO:0007669"/>
    <property type="project" value="UniProtKB-UniRule"/>
</dbReference>
<dbReference type="GO" id="GO:0030170">
    <property type="term" value="F:pyridoxal phosphate binding"/>
    <property type="evidence" value="ECO:0007669"/>
    <property type="project" value="InterPro"/>
</dbReference>
<dbReference type="GO" id="GO:0008483">
    <property type="term" value="F:transaminase activity"/>
    <property type="evidence" value="ECO:0007669"/>
    <property type="project" value="InterPro"/>
</dbReference>
<dbReference type="GO" id="GO:0006782">
    <property type="term" value="P:protoporphyrinogen IX biosynthetic process"/>
    <property type="evidence" value="ECO:0007669"/>
    <property type="project" value="UniProtKB-UniRule"/>
</dbReference>
<dbReference type="CDD" id="cd00610">
    <property type="entry name" value="OAT_like"/>
    <property type="match status" value="1"/>
</dbReference>
<dbReference type="FunFam" id="3.40.640.10:FF:000021">
    <property type="entry name" value="Glutamate-1-semialdehyde 2,1-aminomutase"/>
    <property type="match status" value="1"/>
</dbReference>
<dbReference type="Gene3D" id="3.90.1150.10">
    <property type="entry name" value="Aspartate Aminotransferase, domain 1"/>
    <property type="match status" value="1"/>
</dbReference>
<dbReference type="Gene3D" id="3.40.640.10">
    <property type="entry name" value="Type I PLP-dependent aspartate aminotransferase-like (Major domain)"/>
    <property type="match status" value="1"/>
</dbReference>
<dbReference type="HAMAP" id="MF_00375">
    <property type="entry name" value="HemL_aminotrans_3"/>
    <property type="match status" value="1"/>
</dbReference>
<dbReference type="InterPro" id="IPR004639">
    <property type="entry name" value="4pyrrol_synth_GluAld_NH2Trfase"/>
</dbReference>
<dbReference type="InterPro" id="IPR005814">
    <property type="entry name" value="Aminotrans_3"/>
</dbReference>
<dbReference type="InterPro" id="IPR049704">
    <property type="entry name" value="Aminotrans_3_PPA_site"/>
</dbReference>
<dbReference type="InterPro" id="IPR015424">
    <property type="entry name" value="PyrdxlP-dep_Trfase"/>
</dbReference>
<dbReference type="InterPro" id="IPR015421">
    <property type="entry name" value="PyrdxlP-dep_Trfase_major"/>
</dbReference>
<dbReference type="InterPro" id="IPR015422">
    <property type="entry name" value="PyrdxlP-dep_Trfase_small"/>
</dbReference>
<dbReference type="NCBIfam" id="TIGR00713">
    <property type="entry name" value="hemL"/>
    <property type="match status" value="1"/>
</dbReference>
<dbReference type="NCBIfam" id="NF000818">
    <property type="entry name" value="PRK00062.1"/>
    <property type="match status" value="1"/>
</dbReference>
<dbReference type="PANTHER" id="PTHR43713">
    <property type="entry name" value="GLUTAMATE-1-SEMIALDEHYDE 2,1-AMINOMUTASE"/>
    <property type="match status" value="1"/>
</dbReference>
<dbReference type="PANTHER" id="PTHR43713:SF3">
    <property type="entry name" value="GLUTAMATE-1-SEMIALDEHYDE 2,1-AMINOMUTASE 1, CHLOROPLASTIC-RELATED"/>
    <property type="match status" value="1"/>
</dbReference>
<dbReference type="Pfam" id="PF00202">
    <property type="entry name" value="Aminotran_3"/>
    <property type="match status" value="1"/>
</dbReference>
<dbReference type="SUPFAM" id="SSF53383">
    <property type="entry name" value="PLP-dependent transferases"/>
    <property type="match status" value="1"/>
</dbReference>
<dbReference type="PROSITE" id="PS00600">
    <property type="entry name" value="AA_TRANSFER_CLASS_3"/>
    <property type="match status" value="1"/>
</dbReference>
<sequence>MSRSESLFAQAQKHIPGGVNSPVRAFKSVGGTPLFFKHAEGAYVVDEDDKRYVDYVGSWGPMILGHGHPQVLDAVRNQLQHGLSYGAPTAMETEMADLVCSLVPSMEMVRMVSSGTEATMSAIRLARGYTGRDAIIKFEGCYHGHSDSLLVKAGSGLLTQGVPSSAGVPADFAKHTLTLPFNDIAAVEKTLAEVGQTVACIIVEPVAGNMNCVPPAPGFLEGLREQCDKHGVVLIFDEVMTGFRVSLGGAQGYYGITPDLSTFGKIVGGGMPVGCFGGKREIMGCIAPLGPVYQAGTLSGNPLAMAAGLTTLKLISRPGFHDELSDFTSRMLDGLQQRADAAGVPFVTTQAGAMFGLYFSGADDIVTFDDVMASDAERFKRFFHLMLDGGVYLAPSAFEAGFTSIAHGDKELQITLDAAERAFAALK</sequence>
<gene>
    <name evidence="1" type="primary">hemL</name>
    <name type="ordered locus">PputW619_0636</name>
</gene>
<organism>
    <name type="scientific">Pseudomonas putida (strain W619)</name>
    <dbReference type="NCBI Taxonomy" id="390235"/>
    <lineage>
        <taxon>Bacteria</taxon>
        <taxon>Pseudomonadati</taxon>
        <taxon>Pseudomonadota</taxon>
        <taxon>Gammaproteobacteria</taxon>
        <taxon>Pseudomonadales</taxon>
        <taxon>Pseudomonadaceae</taxon>
        <taxon>Pseudomonas</taxon>
    </lineage>
</organism>
<keyword id="KW-0963">Cytoplasm</keyword>
<keyword id="KW-0413">Isomerase</keyword>
<keyword id="KW-0627">Porphyrin biosynthesis</keyword>
<keyword id="KW-0663">Pyridoxal phosphate</keyword>